<feature type="chain" id="PRO_0000354974" description="HTH-type transcriptional activator mta">
    <location>
        <begin position="1"/>
        <end position="257"/>
    </location>
</feature>
<feature type="domain" description="HTH merR-type" evidence="1">
    <location>
        <begin position="2"/>
        <end position="71"/>
    </location>
</feature>
<feature type="DNA-binding region" description="H-T-H motif" evidence="1">
    <location>
        <begin position="5"/>
        <end position="24"/>
    </location>
</feature>
<feature type="region of interest" description="Hinge">
    <location>
        <begin position="71"/>
        <end position="74"/>
    </location>
</feature>
<feature type="region of interest" description="Essential for dimerization">
    <location>
        <begin position="76"/>
        <end position="104"/>
    </location>
</feature>
<feature type="coiled-coil region">
    <location>
        <begin position="76"/>
        <end position="107"/>
    </location>
</feature>
<feature type="helix" evidence="7">
    <location>
        <begin position="5"/>
        <end position="12"/>
    </location>
</feature>
<feature type="helix" evidence="7">
    <location>
        <begin position="16"/>
        <end position="24"/>
    </location>
</feature>
<feature type="strand" evidence="7">
    <location>
        <begin position="31"/>
        <end position="33"/>
    </location>
</feature>
<feature type="strand" evidence="7">
    <location>
        <begin position="39"/>
        <end position="41"/>
    </location>
</feature>
<feature type="helix" evidence="7">
    <location>
        <begin position="43"/>
        <end position="57"/>
    </location>
</feature>
<feature type="helix" evidence="7">
    <location>
        <begin position="62"/>
        <end position="70"/>
    </location>
</feature>
<feature type="helix" evidence="7">
    <location>
        <begin position="76"/>
        <end position="105"/>
    </location>
</feature>
<dbReference type="EMBL" id="Y08559">
    <property type="protein sequence ID" value="CAA69863.1"/>
    <property type="molecule type" value="Genomic_DNA"/>
</dbReference>
<dbReference type="EMBL" id="AL009126">
    <property type="protein sequence ID" value="CAB15677.1"/>
    <property type="molecule type" value="Genomic_DNA"/>
</dbReference>
<dbReference type="PIR" id="C69661">
    <property type="entry name" value="C69661"/>
</dbReference>
<dbReference type="RefSeq" id="NP_391541.1">
    <property type="nucleotide sequence ID" value="NC_000964.3"/>
</dbReference>
<dbReference type="RefSeq" id="WP_003242936.1">
    <property type="nucleotide sequence ID" value="NZ_OZ025638.1"/>
</dbReference>
<dbReference type="PDB" id="1JBG">
    <property type="method" value="X-ray"/>
    <property type="resolution" value="2.75 A"/>
    <property type="chains" value="A=1-109"/>
</dbReference>
<dbReference type="PDB" id="1R8D">
    <property type="method" value="X-ray"/>
    <property type="resolution" value="2.70 A"/>
    <property type="chains" value="A/B=1-109"/>
</dbReference>
<dbReference type="PDBsum" id="1JBG"/>
<dbReference type="PDBsum" id="1R8D"/>
<dbReference type="SMR" id="P71039"/>
<dbReference type="FunCoup" id="P71039">
    <property type="interactions" value="82"/>
</dbReference>
<dbReference type="STRING" id="224308.BSU36600"/>
<dbReference type="PaxDb" id="224308-BSU36600"/>
<dbReference type="EnsemblBacteria" id="CAB15677">
    <property type="protein sequence ID" value="CAB15677"/>
    <property type="gene ID" value="BSU_36600"/>
</dbReference>
<dbReference type="GeneID" id="936962"/>
<dbReference type="KEGG" id="bsu:BSU36600"/>
<dbReference type="PATRIC" id="fig|224308.179.peg.3961"/>
<dbReference type="eggNOG" id="COG0789">
    <property type="taxonomic scope" value="Bacteria"/>
</dbReference>
<dbReference type="InParanoid" id="P71039"/>
<dbReference type="OrthoDB" id="9814833at2"/>
<dbReference type="PhylomeDB" id="P71039"/>
<dbReference type="BioCyc" id="BSUB:BSU36600-MONOMER"/>
<dbReference type="EvolutionaryTrace" id="P71039"/>
<dbReference type="Proteomes" id="UP000001570">
    <property type="component" value="Chromosome"/>
</dbReference>
<dbReference type="GO" id="GO:0005737">
    <property type="term" value="C:cytoplasm"/>
    <property type="evidence" value="ECO:0007669"/>
    <property type="project" value="UniProtKB-SubCell"/>
</dbReference>
<dbReference type="GO" id="GO:0003677">
    <property type="term" value="F:DNA binding"/>
    <property type="evidence" value="ECO:0007669"/>
    <property type="project" value="UniProtKB-KW"/>
</dbReference>
<dbReference type="GO" id="GO:0003700">
    <property type="term" value="F:DNA-binding transcription factor activity"/>
    <property type="evidence" value="ECO:0000318"/>
    <property type="project" value="GO_Central"/>
</dbReference>
<dbReference type="GO" id="GO:0006355">
    <property type="term" value="P:regulation of DNA-templated transcription"/>
    <property type="evidence" value="ECO:0000318"/>
    <property type="project" value="GO_Central"/>
</dbReference>
<dbReference type="CDD" id="cd01106">
    <property type="entry name" value="HTH_TipAL-Mta"/>
    <property type="match status" value="1"/>
</dbReference>
<dbReference type="Gene3D" id="1.10.1660.10">
    <property type="match status" value="1"/>
</dbReference>
<dbReference type="Gene3D" id="1.10.490.50">
    <property type="entry name" value="Antibiotic binding domain of TipA-like multidrug resistance regulators"/>
    <property type="match status" value="1"/>
</dbReference>
<dbReference type="InterPro" id="IPR009061">
    <property type="entry name" value="DNA-bd_dom_put_sf"/>
</dbReference>
<dbReference type="InterPro" id="IPR000551">
    <property type="entry name" value="MerR-type_HTH_dom"/>
</dbReference>
<dbReference type="InterPro" id="IPR047057">
    <property type="entry name" value="MerR_fam"/>
</dbReference>
<dbReference type="InterPro" id="IPR036244">
    <property type="entry name" value="TipA-like_antibiotic-bd"/>
</dbReference>
<dbReference type="InterPro" id="IPR012925">
    <property type="entry name" value="TipAS_dom"/>
</dbReference>
<dbReference type="PANTHER" id="PTHR30204:SF90">
    <property type="entry name" value="HTH-TYPE TRANSCRIPTIONAL ACTIVATOR MTA"/>
    <property type="match status" value="1"/>
</dbReference>
<dbReference type="PANTHER" id="PTHR30204">
    <property type="entry name" value="REDOX-CYCLING DRUG-SENSING TRANSCRIPTIONAL ACTIVATOR SOXR"/>
    <property type="match status" value="1"/>
</dbReference>
<dbReference type="Pfam" id="PF13411">
    <property type="entry name" value="MerR_1"/>
    <property type="match status" value="1"/>
</dbReference>
<dbReference type="Pfam" id="PF07739">
    <property type="entry name" value="TipAS"/>
    <property type="match status" value="1"/>
</dbReference>
<dbReference type="PRINTS" id="PR00040">
    <property type="entry name" value="HTHMERR"/>
</dbReference>
<dbReference type="SMART" id="SM00422">
    <property type="entry name" value="HTH_MERR"/>
    <property type="match status" value="1"/>
</dbReference>
<dbReference type="SUPFAM" id="SSF89082">
    <property type="entry name" value="Antibiotic binding domain of TipA-like multidrug resistance regulators"/>
    <property type="match status" value="1"/>
</dbReference>
<dbReference type="SUPFAM" id="SSF46955">
    <property type="entry name" value="Putative DNA-binding domain"/>
    <property type="match status" value="1"/>
</dbReference>
<dbReference type="PROSITE" id="PS50937">
    <property type="entry name" value="HTH_MERR_2"/>
    <property type="match status" value="1"/>
</dbReference>
<sequence>MKYQVKQVAEISGVSIRTLHHYDNIELLNPSALTDAGYRLYSDADLERLQQILFFKEIGFRLDEIKEMLDHPNFDRKAALQSQKEILMKKKQRMDEMIQTIDRTLLSVDGGETMNKRDLFAGLSMKDIEEHQQTYADEVRKLYGKEIAEETEKRTSAYSADDWRTIMAEFDSIYRRIAARMKHGPDDAEIQAAVGAFRDHICQYHYDCTLDIFRGLGEVYITDERFTDSINQYGEGLAAFLREAIIIYCDHQENPRP</sequence>
<evidence type="ECO:0000255" key="1">
    <source>
        <dbReference type="PROSITE-ProRule" id="PRU00254"/>
    </source>
</evidence>
<evidence type="ECO:0000269" key="2">
    <source>
    </source>
</evidence>
<evidence type="ECO:0000269" key="3">
    <source>
    </source>
</evidence>
<evidence type="ECO:0000269" key="4">
    <source>
    </source>
</evidence>
<evidence type="ECO:0000269" key="5">
    <source>
    </source>
</evidence>
<evidence type="ECO:0000305" key="6"/>
<evidence type="ECO:0007829" key="7">
    <source>
        <dbReference type="PDB" id="1R8D"/>
    </source>
</evidence>
<organism>
    <name type="scientific">Bacillus subtilis (strain 168)</name>
    <dbReference type="NCBI Taxonomy" id="224308"/>
    <lineage>
        <taxon>Bacteria</taxon>
        <taxon>Bacillati</taxon>
        <taxon>Bacillota</taxon>
        <taxon>Bacilli</taxon>
        <taxon>Bacillales</taxon>
        <taxon>Bacillaceae</taxon>
        <taxon>Bacillus</taxon>
    </lineage>
</organism>
<protein>
    <recommendedName>
        <fullName>HTH-type transcriptional activator mta</fullName>
    </recommendedName>
    <alternativeName>
        <fullName>Multidrug transporter activation protein</fullName>
    </alternativeName>
</protein>
<gene>
    <name type="primary">mta</name>
    <name type="synonym">ywnD</name>
    <name type="ordered locus">BSU36600</name>
</gene>
<accession>P71039</accession>
<accession>Q794Z9</accession>
<proteinExistence type="evidence at protein level"/>
<comment type="function">
    <text evidence="2 5">Global transcriptional regulator that activates transcription of bmr and blt by binding directly to their promoter. Also stimulates the expression of the mta gene itself, ydfK and ymfE.</text>
</comment>
<comment type="subunit">
    <text evidence="3 4">Homodimer.</text>
</comment>
<comment type="subcellular location">
    <subcellularLocation>
        <location evidence="6">Cytoplasm</location>
    </subcellularLocation>
</comment>
<comment type="induction">
    <text evidence="2">Autoregulated.</text>
</comment>
<comment type="domain">
    <text>The central dimerization domain of the first subunit forms a two-helix antiparallel coiled coil with the dimerization domain of the second subunit.</text>
</comment>
<reference key="1">
    <citation type="journal article" date="1997" name="J. Bacteriol.">
        <title>The Bacillus subtilis ureABC operon.</title>
        <authorList>
            <person name="Cruz-Ramos H."/>
            <person name="Glaser P."/>
            <person name="Wray L.V. Jr."/>
            <person name="Fisher S.H."/>
        </authorList>
    </citation>
    <scope>NUCLEOTIDE SEQUENCE [GENOMIC DNA]</scope>
    <source>
        <strain>168</strain>
    </source>
</reference>
<reference key="2">
    <citation type="journal article" date="1997" name="Nature">
        <title>The complete genome sequence of the Gram-positive bacterium Bacillus subtilis.</title>
        <authorList>
            <person name="Kunst F."/>
            <person name="Ogasawara N."/>
            <person name="Moszer I."/>
            <person name="Albertini A.M."/>
            <person name="Alloni G."/>
            <person name="Azevedo V."/>
            <person name="Bertero M.G."/>
            <person name="Bessieres P."/>
            <person name="Bolotin A."/>
            <person name="Borchert S."/>
            <person name="Borriss R."/>
            <person name="Boursier L."/>
            <person name="Brans A."/>
            <person name="Braun M."/>
            <person name="Brignell S.C."/>
            <person name="Bron S."/>
            <person name="Brouillet S."/>
            <person name="Bruschi C.V."/>
            <person name="Caldwell B."/>
            <person name="Capuano V."/>
            <person name="Carter N.M."/>
            <person name="Choi S.-K."/>
            <person name="Codani J.-J."/>
            <person name="Connerton I.F."/>
            <person name="Cummings N.J."/>
            <person name="Daniel R.A."/>
            <person name="Denizot F."/>
            <person name="Devine K.M."/>
            <person name="Duesterhoeft A."/>
            <person name="Ehrlich S.D."/>
            <person name="Emmerson P.T."/>
            <person name="Entian K.-D."/>
            <person name="Errington J."/>
            <person name="Fabret C."/>
            <person name="Ferrari E."/>
            <person name="Foulger D."/>
            <person name="Fritz C."/>
            <person name="Fujita M."/>
            <person name="Fujita Y."/>
            <person name="Fuma S."/>
            <person name="Galizzi A."/>
            <person name="Galleron N."/>
            <person name="Ghim S.-Y."/>
            <person name="Glaser P."/>
            <person name="Goffeau A."/>
            <person name="Golightly E.J."/>
            <person name="Grandi G."/>
            <person name="Guiseppi G."/>
            <person name="Guy B.J."/>
            <person name="Haga K."/>
            <person name="Haiech J."/>
            <person name="Harwood C.R."/>
            <person name="Henaut A."/>
            <person name="Hilbert H."/>
            <person name="Holsappel S."/>
            <person name="Hosono S."/>
            <person name="Hullo M.-F."/>
            <person name="Itaya M."/>
            <person name="Jones L.-M."/>
            <person name="Joris B."/>
            <person name="Karamata D."/>
            <person name="Kasahara Y."/>
            <person name="Klaerr-Blanchard M."/>
            <person name="Klein C."/>
            <person name="Kobayashi Y."/>
            <person name="Koetter P."/>
            <person name="Koningstein G."/>
            <person name="Krogh S."/>
            <person name="Kumano M."/>
            <person name="Kurita K."/>
            <person name="Lapidus A."/>
            <person name="Lardinois S."/>
            <person name="Lauber J."/>
            <person name="Lazarevic V."/>
            <person name="Lee S.-M."/>
            <person name="Levine A."/>
            <person name="Liu H."/>
            <person name="Masuda S."/>
            <person name="Mauel C."/>
            <person name="Medigue C."/>
            <person name="Medina N."/>
            <person name="Mellado R.P."/>
            <person name="Mizuno M."/>
            <person name="Moestl D."/>
            <person name="Nakai S."/>
            <person name="Noback M."/>
            <person name="Noone D."/>
            <person name="O'Reilly M."/>
            <person name="Ogawa K."/>
            <person name="Ogiwara A."/>
            <person name="Oudega B."/>
            <person name="Park S.-H."/>
            <person name="Parro V."/>
            <person name="Pohl T.M."/>
            <person name="Portetelle D."/>
            <person name="Porwollik S."/>
            <person name="Prescott A.M."/>
            <person name="Presecan E."/>
            <person name="Pujic P."/>
            <person name="Purnelle B."/>
            <person name="Rapoport G."/>
            <person name="Rey M."/>
            <person name="Reynolds S."/>
            <person name="Rieger M."/>
            <person name="Rivolta C."/>
            <person name="Rocha E."/>
            <person name="Roche B."/>
            <person name="Rose M."/>
            <person name="Sadaie Y."/>
            <person name="Sato T."/>
            <person name="Scanlan E."/>
            <person name="Schleich S."/>
            <person name="Schroeter R."/>
            <person name="Scoffone F."/>
            <person name="Sekiguchi J."/>
            <person name="Sekowska A."/>
            <person name="Seror S.J."/>
            <person name="Serror P."/>
            <person name="Shin B.-S."/>
            <person name="Soldo B."/>
            <person name="Sorokin A."/>
            <person name="Tacconi E."/>
            <person name="Takagi T."/>
            <person name="Takahashi H."/>
            <person name="Takemaru K."/>
            <person name="Takeuchi M."/>
            <person name="Tamakoshi A."/>
            <person name="Tanaka T."/>
            <person name="Terpstra P."/>
            <person name="Tognoni A."/>
            <person name="Tosato V."/>
            <person name="Uchiyama S."/>
            <person name="Vandenbol M."/>
            <person name="Vannier F."/>
            <person name="Vassarotti A."/>
            <person name="Viari A."/>
            <person name="Wambutt R."/>
            <person name="Wedler E."/>
            <person name="Wedler H."/>
            <person name="Weitzenegger T."/>
            <person name="Winters P."/>
            <person name="Wipat A."/>
            <person name="Yamamoto H."/>
            <person name="Yamane K."/>
            <person name="Yasumoto K."/>
            <person name="Yata K."/>
            <person name="Yoshida K."/>
            <person name="Yoshikawa H.-F."/>
            <person name="Zumstein E."/>
            <person name="Yoshikawa H."/>
            <person name="Danchin A."/>
        </authorList>
    </citation>
    <scope>NUCLEOTIDE SEQUENCE [LARGE SCALE GENOMIC DNA]</scope>
    <source>
        <strain>168</strain>
    </source>
</reference>
<reference key="3">
    <citation type="journal article" date="1999" name="Mol. Microbiol.">
        <title>Mta, a global MerR-type regulator of the Bacillus subtilis multidrug-efflux transporters.</title>
        <authorList>
            <person name="Baranova N.N."/>
            <person name="Danchin A."/>
            <person name="Neyfakh A.A."/>
        </authorList>
    </citation>
    <scope>FUNCTION</scope>
    <scope>DNA-BINDING</scope>
    <scope>INDUCTION</scope>
    <source>
        <strain>168 / BD170</strain>
    </source>
</reference>
<reference key="4">
    <citation type="journal article" date="2008" name="J. Bacteriol.">
        <title>The major facilitator superfamily-type transporter YmfE and the multidrug-efflux activator Mta mediate bacillibactin secretion in Bacillus subtilis.</title>
        <authorList>
            <person name="Miethke M."/>
            <person name="Schmidt S."/>
            <person name="Marahiel M.A."/>
        </authorList>
    </citation>
    <scope>FUNCTION AS A REGULATOR OF YMFE</scope>
    <source>
        <strain>ATCC 21332 / IAM 1213</strain>
    </source>
</reference>
<reference key="5">
    <citation type="journal article" date="2001" name="J. Biol. Chem.">
        <title>Crystal structure of MtaN, a global multidrug transporter gene activator.</title>
        <authorList>
            <person name="Godsey M.H."/>
            <person name="Baranova N.N."/>
            <person name="Neyfakh A.A."/>
            <person name="Brennan R.G."/>
        </authorList>
    </citation>
    <scope>X-RAY CRYSTALLOGRAPHY (2.75 ANGSTROMS) OF 1-109</scope>
    <scope>SUBUNIT</scope>
</reference>
<reference key="6">
    <citation type="journal article" date="2004" name="J. Biol. Chem.">
        <title>The structural mechanism for transcription activation by MerR family member multidrug transporter activation, N terminus.</title>
        <authorList>
            <person name="Newberry K.J."/>
            <person name="Brennan R.G."/>
        </authorList>
    </citation>
    <scope>X-RAY CRYSTALLOGRAPHY (2.7 ANGSTROMS) OF 1-109 IN COMPLEX WITH DNA</scope>
    <scope>SUBUNIT</scope>
</reference>
<name>MTA_BACSU</name>
<keyword id="KW-0002">3D-structure</keyword>
<keyword id="KW-0010">Activator</keyword>
<keyword id="KW-0175">Coiled coil</keyword>
<keyword id="KW-0963">Cytoplasm</keyword>
<keyword id="KW-0238">DNA-binding</keyword>
<keyword id="KW-1185">Reference proteome</keyword>
<keyword id="KW-0804">Transcription</keyword>
<keyword id="KW-0805">Transcription regulation</keyword>